<comment type="function">
    <text evidence="1">NDH-1 shuttles electrons from NADH, via FMN and iron-sulfur (Fe-S) centers, to quinones in the respiratory chain. The immediate electron acceptor for the enzyme in this species is believed to be ubiquinone. Couples the redox reaction to proton translocation (for every two electrons transferred, four hydrogen ions are translocated across the cytoplasmic membrane), and thus conserves the redox energy in a proton gradient.</text>
</comment>
<comment type="catalytic activity">
    <reaction evidence="1">
        <text>a quinone + NADH + 5 H(+)(in) = a quinol + NAD(+) + 4 H(+)(out)</text>
        <dbReference type="Rhea" id="RHEA:57888"/>
        <dbReference type="ChEBI" id="CHEBI:15378"/>
        <dbReference type="ChEBI" id="CHEBI:24646"/>
        <dbReference type="ChEBI" id="CHEBI:57540"/>
        <dbReference type="ChEBI" id="CHEBI:57945"/>
        <dbReference type="ChEBI" id="CHEBI:132124"/>
    </reaction>
</comment>
<comment type="subunit">
    <text evidence="1">NDH-1 is composed of 14 different subunits. Subunits NuoA, H, J, K, L, M, N constitute the membrane sector of the complex.</text>
</comment>
<comment type="subcellular location">
    <subcellularLocation>
        <location evidence="1">Cell inner membrane</location>
        <topology evidence="1">Multi-pass membrane protein</topology>
    </subcellularLocation>
</comment>
<comment type="similarity">
    <text evidence="1">Belongs to the complex I subunit 4L family.</text>
</comment>
<accession>Q1QSU1</accession>
<sequence length="102" mass="11108">MNGIPMEHGLILASILFALGLVGLMMRRNMLFVLMSLEIMMNSAGLAFIVAGTRWGQPDGQVMFLLVITLAAAEASVGLALLLQLYRRFKTLDIDAASRLRG</sequence>
<reference key="1">
    <citation type="journal article" date="2011" name="Stand. Genomic Sci.">
        <title>Complete genome sequence of the halophilic and highly halotolerant Chromohalobacter salexigens type strain (1H11(T)).</title>
        <authorList>
            <person name="Copeland A."/>
            <person name="O'Connor K."/>
            <person name="Lucas S."/>
            <person name="Lapidus A."/>
            <person name="Berry K.W."/>
            <person name="Detter J.C."/>
            <person name="Del Rio T.G."/>
            <person name="Hammon N."/>
            <person name="Dalin E."/>
            <person name="Tice H."/>
            <person name="Pitluck S."/>
            <person name="Bruce D."/>
            <person name="Goodwin L."/>
            <person name="Han C."/>
            <person name="Tapia R."/>
            <person name="Saunders E."/>
            <person name="Schmutz J."/>
            <person name="Brettin T."/>
            <person name="Larimer F."/>
            <person name="Land M."/>
            <person name="Hauser L."/>
            <person name="Vargas C."/>
            <person name="Nieto J.J."/>
            <person name="Kyrpides N.C."/>
            <person name="Ivanova N."/>
            <person name="Goker M."/>
            <person name="Klenk H.P."/>
            <person name="Csonka L.N."/>
            <person name="Woyke T."/>
        </authorList>
    </citation>
    <scope>NUCLEOTIDE SEQUENCE [LARGE SCALE GENOMIC DNA]</scope>
    <source>
        <strain>ATCC BAA-138 / DSM 3043 / CIP 106854 / NCIMB 13768 / 1H11</strain>
    </source>
</reference>
<gene>
    <name evidence="1" type="primary">nuoK</name>
    <name type="ordered locus">Csal_3123</name>
</gene>
<dbReference type="EC" id="7.1.1.-" evidence="1"/>
<dbReference type="EMBL" id="CP000285">
    <property type="protein sequence ID" value="ABE60467.1"/>
    <property type="molecule type" value="Genomic_DNA"/>
</dbReference>
<dbReference type="RefSeq" id="WP_011508413.1">
    <property type="nucleotide sequence ID" value="NC_007963.1"/>
</dbReference>
<dbReference type="SMR" id="Q1QSU1"/>
<dbReference type="STRING" id="290398.Csal_3123"/>
<dbReference type="GeneID" id="95335818"/>
<dbReference type="KEGG" id="csa:Csal_3123"/>
<dbReference type="eggNOG" id="COG0713">
    <property type="taxonomic scope" value="Bacteria"/>
</dbReference>
<dbReference type="HOGENOM" id="CLU_144724_0_1_6"/>
<dbReference type="OrthoDB" id="9801357at2"/>
<dbReference type="Proteomes" id="UP000000239">
    <property type="component" value="Chromosome"/>
</dbReference>
<dbReference type="GO" id="GO:0030964">
    <property type="term" value="C:NADH dehydrogenase complex"/>
    <property type="evidence" value="ECO:0007669"/>
    <property type="project" value="TreeGrafter"/>
</dbReference>
<dbReference type="GO" id="GO:0005886">
    <property type="term" value="C:plasma membrane"/>
    <property type="evidence" value="ECO:0007669"/>
    <property type="project" value="UniProtKB-SubCell"/>
</dbReference>
<dbReference type="GO" id="GO:0050136">
    <property type="term" value="F:NADH:ubiquinone reductase (non-electrogenic) activity"/>
    <property type="evidence" value="ECO:0007669"/>
    <property type="project" value="UniProtKB-UniRule"/>
</dbReference>
<dbReference type="GO" id="GO:0048038">
    <property type="term" value="F:quinone binding"/>
    <property type="evidence" value="ECO:0007669"/>
    <property type="project" value="UniProtKB-KW"/>
</dbReference>
<dbReference type="GO" id="GO:0042773">
    <property type="term" value="P:ATP synthesis coupled electron transport"/>
    <property type="evidence" value="ECO:0007669"/>
    <property type="project" value="InterPro"/>
</dbReference>
<dbReference type="FunFam" id="1.10.287.3510:FF:000001">
    <property type="entry name" value="NADH-quinone oxidoreductase subunit K"/>
    <property type="match status" value="1"/>
</dbReference>
<dbReference type="Gene3D" id="1.10.287.3510">
    <property type="match status" value="1"/>
</dbReference>
<dbReference type="HAMAP" id="MF_01456">
    <property type="entry name" value="NDH1_NuoK"/>
    <property type="match status" value="1"/>
</dbReference>
<dbReference type="InterPro" id="IPR001133">
    <property type="entry name" value="NADH_UbQ_OxRdtase_chain4L/K"/>
</dbReference>
<dbReference type="InterPro" id="IPR039428">
    <property type="entry name" value="NUOK/Mnh_C1-like"/>
</dbReference>
<dbReference type="NCBIfam" id="NF004319">
    <property type="entry name" value="PRK05715.1-1"/>
    <property type="match status" value="1"/>
</dbReference>
<dbReference type="NCBIfam" id="NF004320">
    <property type="entry name" value="PRK05715.1-2"/>
    <property type="match status" value="1"/>
</dbReference>
<dbReference type="PANTHER" id="PTHR11434:SF16">
    <property type="entry name" value="NADH-UBIQUINONE OXIDOREDUCTASE CHAIN 4L"/>
    <property type="match status" value="1"/>
</dbReference>
<dbReference type="PANTHER" id="PTHR11434">
    <property type="entry name" value="NADH-UBIQUINONE OXIDOREDUCTASE SUBUNIT ND4L"/>
    <property type="match status" value="1"/>
</dbReference>
<dbReference type="Pfam" id="PF00420">
    <property type="entry name" value="Oxidored_q2"/>
    <property type="match status" value="1"/>
</dbReference>
<proteinExistence type="inferred from homology"/>
<feature type="chain" id="PRO_0000390016" description="NADH-quinone oxidoreductase subunit K">
    <location>
        <begin position="1"/>
        <end position="102"/>
    </location>
</feature>
<feature type="transmembrane region" description="Helical" evidence="1">
    <location>
        <begin position="4"/>
        <end position="24"/>
    </location>
</feature>
<feature type="transmembrane region" description="Helical" evidence="1">
    <location>
        <begin position="30"/>
        <end position="50"/>
    </location>
</feature>
<feature type="transmembrane region" description="Helical" evidence="1">
    <location>
        <begin position="62"/>
        <end position="82"/>
    </location>
</feature>
<organism>
    <name type="scientific">Chromohalobacter salexigens (strain ATCC BAA-138 / DSM 3043 / CIP 106854 / NCIMB 13768 / 1H11)</name>
    <dbReference type="NCBI Taxonomy" id="290398"/>
    <lineage>
        <taxon>Bacteria</taxon>
        <taxon>Pseudomonadati</taxon>
        <taxon>Pseudomonadota</taxon>
        <taxon>Gammaproteobacteria</taxon>
        <taxon>Oceanospirillales</taxon>
        <taxon>Halomonadaceae</taxon>
        <taxon>Chromohalobacter</taxon>
    </lineage>
</organism>
<protein>
    <recommendedName>
        <fullName evidence="1">NADH-quinone oxidoreductase subunit K</fullName>
        <ecNumber evidence="1">7.1.1.-</ecNumber>
    </recommendedName>
    <alternativeName>
        <fullName evidence="1">NADH dehydrogenase I subunit K</fullName>
    </alternativeName>
    <alternativeName>
        <fullName evidence="1">NDH-1 subunit K</fullName>
    </alternativeName>
</protein>
<name>NUOK_CHRSD</name>
<keyword id="KW-0997">Cell inner membrane</keyword>
<keyword id="KW-1003">Cell membrane</keyword>
<keyword id="KW-0472">Membrane</keyword>
<keyword id="KW-0520">NAD</keyword>
<keyword id="KW-0874">Quinone</keyword>
<keyword id="KW-1185">Reference proteome</keyword>
<keyword id="KW-1278">Translocase</keyword>
<keyword id="KW-0812">Transmembrane</keyword>
<keyword id="KW-1133">Transmembrane helix</keyword>
<keyword id="KW-0813">Transport</keyword>
<keyword id="KW-0830">Ubiquinone</keyword>
<evidence type="ECO:0000255" key="1">
    <source>
        <dbReference type="HAMAP-Rule" id="MF_01456"/>
    </source>
</evidence>